<feature type="chain" id="PRO_1000003909" description="Small ribosomal subunit protein uS2">
    <location>
        <begin position="1"/>
        <end position="246"/>
    </location>
</feature>
<sequence>MAITMRQMLEAGVHFGHQTRFWNPKMAPFIFGHRNKIHIINLEKTLPMYNDALKYVRQLAANRGTILFVGTKRQSRDTIAQEALRAGMPYVNARWLGGMLTNFKTLKVSIKRLKDMEAAVEAGELEKMSKKEALLFEREIAKLQKSIGGVKDMGGIPDAIFVVDVGYHKIAVTEANKLGVPVIAVVDTNHSPEGVDYVIPGNDDSSKAVALYAQGVADAILEGRANAVNEVVQAVRGDDEYVEENA</sequence>
<comment type="similarity">
    <text evidence="1">Belongs to the universal ribosomal protein uS2 family.</text>
</comment>
<accession>A3MKU3</accession>
<dbReference type="EMBL" id="CP000548">
    <property type="protein sequence ID" value="ABO04687.1"/>
    <property type="molecule type" value="Genomic_DNA"/>
</dbReference>
<dbReference type="RefSeq" id="WP_004193246.1">
    <property type="nucleotide sequence ID" value="NZ_CP007802.1"/>
</dbReference>
<dbReference type="SMR" id="A3MKU3"/>
<dbReference type="GeneID" id="93060700"/>
<dbReference type="KEGG" id="bmaz:BM44_1798"/>
<dbReference type="KEGG" id="bmn:BMA10247_1328"/>
<dbReference type="PATRIC" id="fig|320389.8.peg.2012"/>
<dbReference type="GO" id="GO:0022627">
    <property type="term" value="C:cytosolic small ribosomal subunit"/>
    <property type="evidence" value="ECO:0007669"/>
    <property type="project" value="TreeGrafter"/>
</dbReference>
<dbReference type="GO" id="GO:0003735">
    <property type="term" value="F:structural constituent of ribosome"/>
    <property type="evidence" value="ECO:0007669"/>
    <property type="project" value="InterPro"/>
</dbReference>
<dbReference type="GO" id="GO:0006412">
    <property type="term" value="P:translation"/>
    <property type="evidence" value="ECO:0007669"/>
    <property type="project" value="UniProtKB-UniRule"/>
</dbReference>
<dbReference type="CDD" id="cd01425">
    <property type="entry name" value="RPS2"/>
    <property type="match status" value="1"/>
</dbReference>
<dbReference type="FunFam" id="1.10.287.610:FF:000001">
    <property type="entry name" value="30S ribosomal protein S2"/>
    <property type="match status" value="1"/>
</dbReference>
<dbReference type="Gene3D" id="3.40.50.10490">
    <property type="entry name" value="Glucose-6-phosphate isomerase like protein, domain 1"/>
    <property type="match status" value="1"/>
</dbReference>
<dbReference type="Gene3D" id="1.10.287.610">
    <property type="entry name" value="Helix hairpin bin"/>
    <property type="match status" value="1"/>
</dbReference>
<dbReference type="HAMAP" id="MF_00291_B">
    <property type="entry name" value="Ribosomal_uS2_B"/>
    <property type="match status" value="1"/>
</dbReference>
<dbReference type="InterPro" id="IPR001865">
    <property type="entry name" value="Ribosomal_uS2"/>
</dbReference>
<dbReference type="InterPro" id="IPR005706">
    <property type="entry name" value="Ribosomal_uS2_bac/mit/plastid"/>
</dbReference>
<dbReference type="InterPro" id="IPR018130">
    <property type="entry name" value="Ribosomal_uS2_CS"/>
</dbReference>
<dbReference type="InterPro" id="IPR023591">
    <property type="entry name" value="Ribosomal_uS2_flav_dom_sf"/>
</dbReference>
<dbReference type="NCBIfam" id="TIGR01011">
    <property type="entry name" value="rpsB_bact"/>
    <property type="match status" value="1"/>
</dbReference>
<dbReference type="PANTHER" id="PTHR12534">
    <property type="entry name" value="30S RIBOSOMAL PROTEIN S2 PROKARYOTIC AND ORGANELLAR"/>
    <property type="match status" value="1"/>
</dbReference>
<dbReference type="PANTHER" id="PTHR12534:SF0">
    <property type="entry name" value="SMALL RIBOSOMAL SUBUNIT PROTEIN US2M"/>
    <property type="match status" value="1"/>
</dbReference>
<dbReference type="Pfam" id="PF00318">
    <property type="entry name" value="Ribosomal_S2"/>
    <property type="match status" value="1"/>
</dbReference>
<dbReference type="PRINTS" id="PR00395">
    <property type="entry name" value="RIBOSOMALS2"/>
</dbReference>
<dbReference type="SUPFAM" id="SSF52313">
    <property type="entry name" value="Ribosomal protein S2"/>
    <property type="match status" value="1"/>
</dbReference>
<dbReference type="PROSITE" id="PS00962">
    <property type="entry name" value="RIBOSOMAL_S2_1"/>
    <property type="match status" value="1"/>
</dbReference>
<evidence type="ECO:0000255" key="1">
    <source>
        <dbReference type="HAMAP-Rule" id="MF_00291"/>
    </source>
</evidence>
<evidence type="ECO:0000305" key="2"/>
<proteinExistence type="inferred from homology"/>
<organism>
    <name type="scientific">Burkholderia mallei (strain NCTC 10247)</name>
    <dbReference type="NCBI Taxonomy" id="320389"/>
    <lineage>
        <taxon>Bacteria</taxon>
        <taxon>Pseudomonadati</taxon>
        <taxon>Pseudomonadota</taxon>
        <taxon>Betaproteobacteria</taxon>
        <taxon>Burkholderiales</taxon>
        <taxon>Burkholderiaceae</taxon>
        <taxon>Burkholderia</taxon>
        <taxon>pseudomallei group</taxon>
    </lineage>
</organism>
<name>RS2_BURM7</name>
<gene>
    <name evidence="1" type="primary">rpsB</name>
    <name type="ordered locus">BMA10247_1328</name>
</gene>
<keyword id="KW-0687">Ribonucleoprotein</keyword>
<keyword id="KW-0689">Ribosomal protein</keyword>
<protein>
    <recommendedName>
        <fullName evidence="1">Small ribosomal subunit protein uS2</fullName>
    </recommendedName>
    <alternativeName>
        <fullName evidence="2">30S ribosomal protein S2</fullName>
    </alternativeName>
</protein>
<reference key="1">
    <citation type="journal article" date="2010" name="Genome Biol. Evol.">
        <title>Continuing evolution of Burkholderia mallei through genome reduction and large-scale rearrangements.</title>
        <authorList>
            <person name="Losada L."/>
            <person name="Ronning C.M."/>
            <person name="DeShazer D."/>
            <person name="Woods D."/>
            <person name="Fedorova N."/>
            <person name="Kim H.S."/>
            <person name="Shabalina S.A."/>
            <person name="Pearson T.R."/>
            <person name="Brinkac L."/>
            <person name="Tan P."/>
            <person name="Nandi T."/>
            <person name="Crabtree J."/>
            <person name="Badger J."/>
            <person name="Beckstrom-Sternberg S."/>
            <person name="Saqib M."/>
            <person name="Schutzer S.E."/>
            <person name="Keim P."/>
            <person name="Nierman W.C."/>
        </authorList>
    </citation>
    <scope>NUCLEOTIDE SEQUENCE [LARGE SCALE GENOMIC DNA]</scope>
    <source>
        <strain>NCTC 10247</strain>
    </source>
</reference>